<sequence>MGIKDWPEGEGPRDKLLQKGAAYLSDAELLAVLLRNGLAGLNAVDLARSLISEFGGLRNLLCAPKNQVCRLPGVGPVKYAQLQAAAELARRVAQENLQRGQVLTNPDLTRDYLMRQLTDRSYEVFAILLLDSQHRVIQFVELFRGTIDSASVYPREVVSLVLEKKAAAVIVCHNHPSGIAEPSQADRRITERLKNALATIDVSLLDHMVVGDREIVSFAERGWIN</sequence>
<reference key="1">
    <citation type="submission" date="2007-04" db="EMBL/GenBank/DDBJ databases">
        <title>Complete sequence of Shewanella putrefaciens CN-32.</title>
        <authorList>
            <consortium name="US DOE Joint Genome Institute"/>
            <person name="Copeland A."/>
            <person name="Lucas S."/>
            <person name="Lapidus A."/>
            <person name="Barry K."/>
            <person name="Detter J.C."/>
            <person name="Glavina del Rio T."/>
            <person name="Hammon N."/>
            <person name="Israni S."/>
            <person name="Dalin E."/>
            <person name="Tice H."/>
            <person name="Pitluck S."/>
            <person name="Chain P."/>
            <person name="Malfatti S."/>
            <person name="Shin M."/>
            <person name="Vergez L."/>
            <person name="Schmutz J."/>
            <person name="Larimer F."/>
            <person name="Land M."/>
            <person name="Hauser L."/>
            <person name="Kyrpides N."/>
            <person name="Mikhailova N."/>
            <person name="Romine M.F."/>
            <person name="Fredrickson J."/>
            <person name="Tiedje J."/>
            <person name="Richardson P."/>
        </authorList>
    </citation>
    <scope>NUCLEOTIDE SEQUENCE [LARGE SCALE GENOMIC DNA]</scope>
    <source>
        <strain>CN-32 / ATCC BAA-453</strain>
    </source>
</reference>
<protein>
    <recommendedName>
        <fullName>UPF0758 protein Sputcn32_0462</fullName>
    </recommendedName>
</protein>
<organism>
    <name type="scientific">Shewanella putrefaciens (strain CN-32 / ATCC BAA-453)</name>
    <dbReference type="NCBI Taxonomy" id="319224"/>
    <lineage>
        <taxon>Bacteria</taxon>
        <taxon>Pseudomonadati</taxon>
        <taxon>Pseudomonadota</taxon>
        <taxon>Gammaproteobacteria</taxon>
        <taxon>Alteromonadales</taxon>
        <taxon>Shewanellaceae</taxon>
        <taxon>Shewanella</taxon>
    </lineage>
</organism>
<comment type="similarity">
    <text evidence="2">Belongs to the UPF0758 family.</text>
</comment>
<gene>
    <name type="ordered locus">Sputcn32_0462</name>
</gene>
<evidence type="ECO:0000255" key="1">
    <source>
        <dbReference type="PROSITE-ProRule" id="PRU01182"/>
    </source>
</evidence>
<evidence type="ECO:0000305" key="2"/>
<feature type="chain" id="PRO_1000001694" description="UPF0758 protein Sputcn32_0462">
    <location>
        <begin position="1"/>
        <end position="225"/>
    </location>
</feature>
<feature type="domain" description="MPN" evidence="1">
    <location>
        <begin position="102"/>
        <end position="224"/>
    </location>
</feature>
<feature type="short sequence motif" description="JAMM motif" evidence="1">
    <location>
        <begin position="173"/>
        <end position="186"/>
    </location>
</feature>
<feature type="binding site" evidence="1">
    <location>
        <position position="173"/>
    </location>
    <ligand>
        <name>Zn(2+)</name>
        <dbReference type="ChEBI" id="CHEBI:29105"/>
        <note>catalytic</note>
    </ligand>
</feature>
<feature type="binding site" evidence="1">
    <location>
        <position position="175"/>
    </location>
    <ligand>
        <name>Zn(2+)</name>
        <dbReference type="ChEBI" id="CHEBI:29105"/>
        <note>catalytic</note>
    </ligand>
</feature>
<feature type="binding site" evidence="1">
    <location>
        <position position="186"/>
    </location>
    <ligand>
        <name>Zn(2+)</name>
        <dbReference type="ChEBI" id="CHEBI:29105"/>
        <note>catalytic</note>
    </ligand>
</feature>
<keyword id="KW-0378">Hydrolase</keyword>
<keyword id="KW-0479">Metal-binding</keyword>
<keyword id="KW-0482">Metalloprotease</keyword>
<keyword id="KW-0645">Protease</keyword>
<keyword id="KW-0862">Zinc</keyword>
<proteinExistence type="inferred from homology"/>
<dbReference type="EMBL" id="CP000681">
    <property type="protein sequence ID" value="ABP74194.1"/>
    <property type="molecule type" value="Genomic_DNA"/>
</dbReference>
<dbReference type="SMR" id="A4Y2L1"/>
<dbReference type="STRING" id="319224.Sputcn32_0462"/>
<dbReference type="KEGG" id="spc:Sputcn32_0462"/>
<dbReference type="eggNOG" id="COG2003">
    <property type="taxonomic scope" value="Bacteria"/>
</dbReference>
<dbReference type="HOGENOM" id="CLU_073529_0_1_6"/>
<dbReference type="GO" id="GO:0046872">
    <property type="term" value="F:metal ion binding"/>
    <property type="evidence" value="ECO:0007669"/>
    <property type="project" value="UniProtKB-KW"/>
</dbReference>
<dbReference type="GO" id="GO:0008237">
    <property type="term" value="F:metallopeptidase activity"/>
    <property type="evidence" value="ECO:0007669"/>
    <property type="project" value="UniProtKB-KW"/>
</dbReference>
<dbReference type="GO" id="GO:0006508">
    <property type="term" value="P:proteolysis"/>
    <property type="evidence" value="ECO:0007669"/>
    <property type="project" value="UniProtKB-KW"/>
</dbReference>
<dbReference type="CDD" id="cd08071">
    <property type="entry name" value="MPN_DUF2466"/>
    <property type="match status" value="1"/>
</dbReference>
<dbReference type="FunFam" id="3.40.140.10:FF:000032">
    <property type="entry name" value="DNA repair protein RadC"/>
    <property type="match status" value="1"/>
</dbReference>
<dbReference type="Gene3D" id="3.40.140.10">
    <property type="entry name" value="Cytidine Deaminase, domain 2"/>
    <property type="match status" value="1"/>
</dbReference>
<dbReference type="InterPro" id="IPR037518">
    <property type="entry name" value="MPN"/>
</dbReference>
<dbReference type="InterPro" id="IPR025657">
    <property type="entry name" value="RadC_JAB"/>
</dbReference>
<dbReference type="InterPro" id="IPR010994">
    <property type="entry name" value="RuvA_2-like"/>
</dbReference>
<dbReference type="InterPro" id="IPR001405">
    <property type="entry name" value="UPF0758"/>
</dbReference>
<dbReference type="InterPro" id="IPR020891">
    <property type="entry name" value="UPF0758_CS"/>
</dbReference>
<dbReference type="InterPro" id="IPR046778">
    <property type="entry name" value="UPF0758_N"/>
</dbReference>
<dbReference type="NCBIfam" id="NF000642">
    <property type="entry name" value="PRK00024.1"/>
    <property type="match status" value="1"/>
</dbReference>
<dbReference type="NCBIfam" id="TIGR00608">
    <property type="entry name" value="radc"/>
    <property type="match status" value="1"/>
</dbReference>
<dbReference type="PANTHER" id="PTHR30471">
    <property type="entry name" value="DNA REPAIR PROTEIN RADC"/>
    <property type="match status" value="1"/>
</dbReference>
<dbReference type="PANTHER" id="PTHR30471:SF3">
    <property type="entry name" value="UPF0758 PROTEIN YEES-RELATED"/>
    <property type="match status" value="1"/>
</dbReference>
<dbReference type="Pfam" id="PF04002">
    <property type="entry name" value="RadC"/>
    <property type="match status" value="1"/>
</dbReference>
<dbReference type="Pfam" id="PF20582">
    <property type="entry name" value="UPF0758_N"/>
    <property type="match status" value="1"/>
</dbReference>
<dbReference type="SUPFAM" id="SSF102712">
    <property type="entry name" value="JAB1/MPN domain"/>
    <property type="match status" value="1"/>
</dbReference>
<dbReference type="SUPFAM" id="SSF47781">
    <property type="entry name" value="RuvA domain 2-like"/>
    <property type="match status" value="1"/>
</dbReference>
<dbReference type="PROSITE" id="PS50249">
    <property type="entry name" value="MPN"/>
    <property type="match status" value="1"/>
</dbReference>
<dbReference type="PROSITE" id="PS01302">
    <property type="entry name" value="UPF0758"/>
    <property type="match status" value="1"/>
</dbReference>
<accession>A4Y2L1</accession>
<name>Y462_SHEPC</name>